<gene>
    <name type="primary">MFAP3</name>
</gene>
<feature type="signal peptide" evidence="2">
    <location>
        <begin position="1"/>
        <end position="19"/>
    </location>
</feature>
<feature type="chain" id="PRO_0000014867" description="Microfibril-associated glycoprotein 3">
    <location>
        <begin position="20"/>
        <end position="362"/>
    </location>
</feature>
<feature type="topological domain" description="Extracellular" evidence="2">
    <location>
        <begin position="20"/>
        <end position="146"/>
    </location>
</feature>
<feature type="transmembrane region" description="Helical" evidence="2">
    <location>
        <begin position="147"/>
        <end position="167"/>
    </location>
</feature>
<feature type="topological domain" description="Cytoplasmic" evidence="2">
    <location>
        <begin position="168"/>
        <end position="362"/>
    </location>
</feature>
<feature type="domain" description="Ig-like C2-type">
    <location>
        <begin position="45"/>
        <end position="137"/>
    </location>
</feature>
<feature type="region of interest" description="Disordered" evidence="4">
    <location>
        <begin position="282"/>
        <end position="306"/>
    </location>
</feature>
<feature type="region of interest" description="Disordered" evidence="4">
    <location>
        <begin position="319"/>
        <end position="362"/>
    </location>
</feature>
<feature type="compositionally biased region" description="Polar residues" evidence="4">
    <location>
        <begin position="319"/>
        <end position="337"/>
    </location>
</feature>
<feature type="glycosylation site" description="N-linked (GlcNAc...) asparagine" evidence="2">
    <location>
        <position position="36"/>
    </location>
</feature>
<feature type="glycosylation site" description="N-linked (GlcNAc...) asparagine" evidence="2">
    <location>
        <position position="41"/>
    </location>
</feature>
<feature type="glycosylation site" description="N-linked (GlcNAc...) asparagine" evidence="2">
    <location>
        <position position="110"/>
    </location>
</feature>
<feature type="disulfide bond" evidence="3">
    <location>
        <begin position="73"/>
        <end position="124"/>
    </location>
</feature>
<accession>Q5R9E4</accession>
<organism>
    <name type="scientific">Pongo abelii</name>
    <name type="common">Sumatran orangutan</name>
    <name type="synonym">Pongo pygmaeus abelii</name>
    <dbReference type="NCBI Taxonomy" id="9601"/>
    <lineage>
        <taxon>Eukaryota</taxon>
        <taxon>Metazoa</taxon>
        <taxon>Chordata</taxon>
        <taxon>Craniata</taxon>
        <taxon>Vertebrata</taxon>
        <taxon>Euteleostomi</taxon>
        <taxon>Mammalia</taxon>
        <taxon>Eutheria</taxon>
        <taxon>Euarchontoglires</taxon>
        <taxon>Primates</taxon>
        <taxon>Haplorrhini</taxon>
        <taxon>Catarrhini</taxon>
        <taxon>Hominidae</taxon>
        <taxon>Pongo</taxon>
    </lineage>
</organism>
<comment type="function">
    <text evidence="1">Component of the elastin-associated microfibrils.</text>
</comment>
<comment type="subcellular location">
    <subcellularLocation>
        <location evidence="5">Cell membrane</location>
        <topology evidence="5">Single-pass type I membrane protein</topology>
    </subcellularLocation>
</comment>
<comment type="PTM">
    <text evidence="5">Glycosylated.</text>
</comment>
<evidence type="ECO:0000250" key="1"/>
<evidence type="ECO:0000255" key="2"/>
<evidence type="ECO:0000255" key="3">
    <source>
        <dbReference type="PROSITE-ProRule" id="PRU00114"/>
    </source>
</evidence>
<evidence type="ECO:0000256" key="4">
    <source>
        <dbReference type="SAM" id="MobiDB-lite"/>
    </source>
</evidence>
<evidence type="ECO:0000305" key="5"/>
<name>MFAP3_PONAB</name>
<reference key="1">
    <citation type="submission" date="2004-11" db="EMBL/GenBank/DDBJ databases">
        <authorList>
            <consortium name="The German cDNA consortium"/>
        </authorList>
    </citation>
    <scope>NUCLEOTIDE SEQUENCE [LARGE SCALE MRNA]</scope>
    <source>
        <tissue>Kidney</tissue>
    </source>
</reference>
<sequence length="362" mass="40106">MKLHCCLFTLVASIIVPAAFVLEDVDFNQMVSLEANRSSYNASFPSSFELSASSHSDDDVIIAKEGTSVSIECLLTASHYEDVHWHNSKGQQLDGRGRGGKWLVSDNFLNITNVAFDDRGLYTCFVTSPIRASYSVTLRVIFTSGDMSVYYMIVCLIAFTITLILNVTRLCMMSSHLRKTEKAINEFFRTEGAEKLQKAFEIAKRIPIITSAKTLELAKVTQFKTMEFARYIEELARSVPLPPLILNCRAFVEEMFEAVRVDDPDDLGERIKERPALNAQGGIYVINPEMGRSNSPGGDSDDGSLNEQGQEIAVQVSVHLQSETKSIDTESQGSSHFSPPDDTGSAESNCNYKDGAYENSQL</sequence>
<dbReference type="EMBL" id="CR859445">
    <property type="protein sequence ID" value="CAH91616.1"/>
    <property type="molecule type" value="mRNA"/>
</dbReference>
<dbReference type="RefSeq" id="NP_001125952.1">
    <property type="nucleotide sequence ID" value="NM_001132480.1"/>
</dbReference>
<dbReference type="RefSeq" id="XP_024102439.1">
    <property type="nucleotide sequence ID" value="XM_024246671.3"/>
</dbReference>
<dbReference type="FunCoup" id="Q5R9E4">
    <property type="interactions" value="1103"/>
</dbReference>
<dbReference type="STRING" id="9601.ENSPPYP00000017873"/>
<dbReference type="GlyCosmos" id="Q5R9E4">
    <property type="glycosylation" value="3 sites, No reported glycans"/>
</dbReference>
<dbReference type="Ensembl" id="ENSPPYT00000018589.3">
    <property type="protein sequence ID" value="ENSPPYP00000017873.2"/>
    <property type="gene ID" value="ENSPPYG00000015972.3"/>
</dbReference>
<dbReference type="GeneID" id="100172887"/>
<dbReference type="KEGG" id="pon:100172887"/>
<dbReference type="CTD" id="4238"/>
<dbReference type="eggNOG" id="ENOG502QW9J">
    <property type="taxonomic scope" value="Eukaryota"/>
</dbReference>
<dbReference type="GeneTree" id="ENSGT00390000011576"/>
<dbReference type="HOGENOM" id="CLU_056017_0_0_1"/>
<dbReference type="InParanoid" id="Q5R9E4"/>
<dbReference type="OMA" id="KPHCCLF"/>
<dbReference type="OrthoDB" id="8611351at2759"/>
<dbReference type="TreeFam" id="TF333205"/>
<dbReference type="Proteomes" id="UP000001595">
    <property type="component" value="Chromosome 5"/>
</dbReference>
<dbReference type="GO" id="GO:0005886">
    <property type="term" value="C:plasma membrane"/>
    <property type="evidence" value="ECO:0007669"/>
    <property type="project" value="UniProtKB-SubCell"/>
</dbReference>
<dbReference type="CDD" id="cd00096">
    <property type="entry name" value="Ig"/>
    <property type="match status" value="1"/>
</dbReference>
<dbReference type="FunFam" id="2.60.40.10:FF:003021">
    <property type="entry name" value="Microfibril-associated glycoprotein 3"/>
    <property type="match status" value="1"/>
</dbReference>
<dbReference type="Gene3D" id="2.60.40.10">
    <property type="entry name" value="Immunoglobulins"/>
    <property type="match status" value="1"/>
</dbReference>
<dbReference type="InterPro" id="IPR007110">
    <property type="entry name" value="Ig-like_dom"/>
</dbReference>
<dbReference type="InterPro" id="IPR036179">
    <property type="entry name" value="Ig-like_dom_sf"/>
</dbReference>
<dbReference type="InterPro" id="IPR013783">
    <property type="entry name" value="Ig-like_fold"/>
</dbReference>
<dbReference type="InterPro" id="IPR003599">
    <property type="entry name" value="Ig_sub"/>
</dbReference>
<dbReference type="InterPro" id="IPR003598">
    <property type="entry name" value="Ig_sub2"/>
</dbReference>
<dbReference type="InterPro" id="IPR013151">
    <property type="entry name" value="Immunoglobulin_dom"/>
</dbReference>
<dbReference type="PANTHER" id="PTHR14340">
    <property type="entry name" value="MICROFIBRIL-ASSOCIATED GLYCOPROTEIN 3"/>
    <property type="match status" value="1"/>
</dbReference>
<dbReference type="PANTHER" id="PTHR14340:SF4">
    <property type="entry name" value="MICROFIBRIL-ASSOCIATED GLYCOPROTEIN 3"/>
    <property type="match status" value="1"/>
</dbReference>
<dbReference type="Pfam" id="PF00047">
    <property type="entry name" value="ig"/>
    <property type="match status" value="1"/>
</dbReference>
<dbReference type="SMART" id="SM00409">
    <property type="entry name" value="IG"/>
    <property type="match status" value="1"/>
</dbReference>
<dbReference type="SMART" id="SM00408">
    <property type="entry name" value="IGc2"/>
    <property type="match status" value="1"/>
</dbReference>
<dbReference type="SUPFAM" id="SSF48726">
    <property type="entry name" value="Immunoglobulin"/>
    <property type="match status" value="1"/>
</dbReference>
<dbReference type="PROSITE" id="PS50835">
    <property type="entry name" value="IG_LIKE"/>
    <property type="match status" value="1"/>
</dbReference>
<keyword id="KW-1003">Cell membrane</keyword>
<keyword id="KW-1015">Disulfide bond</keyword>
<keyword id="KW-0325">Glycoprotein</keyword>
<keyword id="KW-0393">Immunoglobulin domain</keyword>
<keyword id="KW-0472">Membrane</keyword>
<keyword id="KW-1185">Reference proteome</keyword>
<keyword id="KW-0732">Signal</keyword>
<keyword id="KW-0812">Transmembrane</keyword>
<keyword id="KW-1133">Transmembrane helix</keyword>
<protein>
    <recommendedName>
        <fullName>Microfibril-associated glycoprotein 3</fullName>
    </recommendedName>
</protein>
<proteinExistence type="evidence at transcript level"/>